<gene>
    <name type="primary">fruK</name>
    <name type="ordered locus">c2703</name>
</gene>
<evidence type="ECO:0000250" key="1">
    <source>
        <dbReference type="UniProtKB" id="P0A9J6"/>
    </source>
</evidence>
<evidence type="ECO:0000250" key="2">
    <source>
        <dbReference type="UniProtKB" id="P0AEW9"/>
    </source>
</evidence>
<evidence type="ECO:0000305" key="3"/>
<dbReference type="EC" id="2.7.1.56" evidence="2"/>
<dbReference type="EMBL" id="AE014075">
    <property type="protein sequence ID" value="AAN81157.1"/>
    <property type="molecule type" value="Genomic_DNA"/>
</dbReference>
<dbReference type="RefSeq" id="WP_000091263.1">
    <property type="nucleotide sequence ID" value="NZ_CP051263.1"/>
</dbReference>
<dbReference type="SMR" id="P0AEX0"/>
<dbReference type="STRING" id="199310.c2703"/>
<dbReference type="GeneID" id="75206421"/>
<dbReference type="KEGG" id="ecc:c2703"/>
<dbReference type="eggNOG" id="COG1105">
    <property type="taxonomic scope" value="Bacteria"/>
</dbReference>
<dbReference type="HOGENOM" id="CLU_050013_0_1_6"/>
<dbReference type="BioCyc" id="ECOL199310:C2703-MONOMER"/>
<dbReference type="Proteomes" id="UP000001410">
    <property type="component" value="Chromosome"/>
</dbReference>
<dbReference type="GO" id="GO:0005829">
    <property type="term" value="C:cytosol"/>
    <property type="evidence" value="ECO:0007669"/>
    <property type="project" value="TreeGrafter"/>
</dbReference>
<dbReference type="GO" id="GO:0008662">
    <property type="term" value="F:1-phosphofructokinase activity"/>
    <property type="evidence" value="ECO:0007669"/>
    <property type="project" value="UniProtKB-EC"/>
</dbReference>
<dbReference type="GO" id="GO:0005524">
    <property type="term" value="F:ATP binding"/>
    <property type="evidence" value="ECO:0007669"/>
    <property type="project" value="UniProtKB-KW"/>
</dbReference>
<dbReference type="CDD" id="cd01164">
    <property type="entry name" value="FruK_PfkB_like"/>
    <property type="match status" value="1"/>
</dbReference>
<dbReference type="FunFam" id="3.40.1190.20:FF:000001">
    <property type="entry name" value="Phosphofructokinase"/>
    <property type="match status" value="1"/>
</dbReference>
<dbReference type="Gene3D" id="3.40.1190.20">
    <property type="match status" value="1"/>
</dbReference>
<dbReference type="InterPro" id="IPR022463">
    <property type="entry name" value="1-PFruKinase"/>
</dbReference>
<dbReference type="InterPro" id="IPR002173">
    <property type="entry name" value="Carboh/pur_kinase_PfkB_CS"/>
</dbReference>
<dbReference type="InterPro" id="IPR011611">
    <property type="entry name" value="PfkB_dom"/>
</dbReference>
<dbReference type="InterPro" id="IPR029056">
    <property type="entry name" value="Ribokinase-like"/>
</dbReference>
<dbReference type="InterPro" id="IPR017583">
    <property type="entry name" value="Tagatose/fructose_Pkinase"/>
</dbReference>
<dbReference type="NCBIfam" id="TIGR03168">
    <property type="entry name" value="1-PFK"/>
    <property type="match status" value="1"/>
</dbReference>
<dbReference type="NCBIfam" id="TIGR03828">
    <property type="entry name" value="pfkB"/>
    <property type="match status" value="1"/>
</dbReference>
<dbReference type="NCBIfam" id="NF007068">
    <property type="entry name" value="PRK09513.1"/>
    <property type="match status" value="1"/>
</dbReference>
<dbReference type="PANTHER" id="PTHR46566:SF5">
    <property type="entry name" value="1-PHOSPHOFRUCTOKINASE"/>
    <property type="match status" value="1"/>
</dbReference>
<dbReference type="PANTHER" id="PTHR46566">
    <property type="entry name" value="1-PHOSPHOFRUCTOKINASE-RELATED"/>
    <property type="match status" value="1"/>
</dbReference>
<dbReference type="Pfam" id="PF00294">
    <property type="entry name" value="PfkB"/>
    <property type="match status" value="1"/>
</dbReference>
<dbReference type="PIRSF" id="PIRSF000535">
    <property type="entry name" value="1PFK/6PFK/LacC"/>
    <property type="match status" value="1"/>
</dbReference>
<dbReference type="SUPFAM" id="SSF53613">
    <property type="entry name" value="Ribokinase-like"/>
    <property type="match status" value="1"/>
</dbReference>
<dbReference type="PROSITE" id="PS00583">
    <property type="entry name" value="PFKB_KINASES_1"/>
    <property type="match status" value="1"/>
</dbReference>
<dbReference type="PROSITE" id="PS00584">
    <property type="entry name" value="PFKB_KINASES_2"/>
    <property type="match status" value="1"/>
</dbReference>
<sequence>MSRRVATITLNPAYDLVGFCPEIERGEVNLVKTTGLHAAGKGINVAKVLKDLGIDVTVGGFLGKDNQDGFQQLFSELGIANRFQVVQGRTRINVKLTEKDGEVTDFNFSGFEVTPADWERFVTDSLSWLGQFDMVCVSGSLPSGVSPEAFTDWMTRLRSQCPCIIFDSSREALVAGLKAAPWLVKPNRRELEIWAGRKLPEMKDVIEAAHALREQGIAHVVISLGAEGALWVNASGEWIAKPPSVDVVSTVGAGDSMVGGLIYGLLMRESSEHTLRLATAVAALAVSQSNVGITDRPQLAAMMARVDLQPFN</sequence>
<reference key="1">
    <citation type="journal article" date="2002" name="Proc. Natl. Acad. Sci. U.S.A.">
        <title>Extensive mosaic structure revealed by the complete genome sequence of uropathogenic Escherichia coli.</title>
        <authorList>
            <person name="Welch R.A."/>
            <person name="Burland V."/>
            <person name="Plunkett G. III"/>
            <person name="Redford P."/>
            <person name="Roesch P."/>
            <person name="Rasko D."/>
            <person name="Buckles E.L."/>
            <person name="Liou S.-R."/>
            <person name="Boutin A."/>
            <person name="Hackett J."/>
            <person name="Stroud D."/>
            <person name="Mayhew G.F."/>
            <person name="Rose D.J."/>
            <person name="Zhou S."/>
            <person name="Schwartz D.C."/>
            <person name="Perna N.T."/>
            <person name="Mobley H.L.T."/>
            <person name="Donnenberg M.S."/>
            <person name="Blattner F.R."/>
        </authorList>
    </citation>
    <scope>NUCLEOTIDE SEQUENCE [LARGE SCALE GENOMIC DNA]</scope>
    <source>
        <strain>CFT073 / ATCC 700928 / UPEC</strain>
    </source>
</reference>
<proteinExistence type="inferred from homology"/>
<feature type="chain" id="PRO_0000080078" description="1-phosphofructokinase">
    <location>
        <begin position="1"/>
        <end position="312"/>
    </location>
</feature>
<feature type="active site" description="Proton acceptor" evidence="1">
    <location>
        <position position="255"/>
    </location>
</feature>
<feature type="binding site" evidence="1">
    <location>
        <begin position="223"/>
        <end position="228"/>
    </location>
    <ligand>
        <name>ATP</name>
        <dbReference type="ChEBI" id="CHEBI:30616"/>
    </ligand>
</feature>
<feature type="binding site" evidence="1">
    <location>
        <begin position="254"/>
        <end position="255"/>
    </location>
    <ligand>
        <name>ATP</name>
        <dbReference type="ChEBI" id="CHEBI:30616"/>
    </ligand>
</feature>
<comment type="function">
    <text evidence="2">Catalyzes the ATP-dependent phosphorylation of fructose-l-phosphate to fructose-l,6-bisphosphate.</text>
</comment>
<comment type="catalytic activity">
    <reaction evidence="2">
        <text>beta-D-fructose 1-phosphate + ATP = beta-D-fructose 1,6-bisphosphate + ADP + H(+)</text>
        <dbReference type="Rhea" id="RHEA:14213"/>
        <dbReference type="ChEBI" id="CHEBI:15378"/>
        <dbReference type="ChEBI" id="CHEBI:30616"/>
        <dbReference type="ChEBI" id="CHEBI:32966"/>
        <dbReference type="ChEBI" id="CHEBI:138881"/>
        <dbReference type="ChEBI" id="CHEBI:456216"/>
        <dbReference type="EC" id="2.7.1.56"/>
    </reaction>
</comment>
<comment type="similarity">
    <text evidence="3">Belongs to the carbohydrate kinase PfkB family.</text>
</comment>
<organism>
    <name type="scientific">Escherichia coli O6:H1 (strain CFT073 / ATCC 700928 / UPEC)</name>
    <dbReference type="NCBI Taxonomy" id="199310"/>
    <lineage>
        <taxon>Bacteria</taxon>
        <taxon>Pseudomonadati</taxon>
        <taxon>Pseudomonadota</taxon>
        <taxon>Gammaproteobacteria</taxon>
        <taxon>Enterobacterales</taxon>
        <taxon>Enterobacteriaceae</taxon>
        <taxon>Escherichia</taxon>
    </lineage>
</organism>
<keyword id="KW-0067">ATP-binding</keyword>
<keyword id="KW-0418">Kinase</keyword>
<keyword id="KW-0547">Nucleotide-binding</keyword>
<keyword id="KW-1185">Reference proteome</keyword>
<keyword id="KW-0808">Transferase</keyword>
<protein>
    <recommendedName>
        <fullName evidence="2">1-phosphofructokinase</fullName>
        <ecNumber evidence="2">2.7.1.56</ecNumber>
    </recommendedName>
    <alternativeName>
        <fullName evidence="2">Fructose 1-phosphate kinase</fullName>
        <shortName evidence="2">Fru1PK</shortName>
    </alternativeName>
</protein>
<name>K1PF_ECOL6</name>
<accession>P0AEX0</accession>
<accession>P23539</accession>